<gene>
    <name evidence="5" type="primary">vldW</name>
    <name evidence="10" type="ORF">SHL15_8012</name>
</gene>
<proteinExistence type="evidence at protein level"/>
<organism>
    <name type="scientific">Streptomyces hygroscopicus subsp. limoneus</name>
    <dbReference type="NCBI Taxonomy" id="264445"/>
    <lineage>
        <taxon>Bacteria</taxon>
        <taxon>Bacillati</taxon>
        <taxon>Actinomycetota</taxon>
        <taxon>Actinomycetes</taxon>
        <taxon>Kitasatosporales</taxon>
        <taxon>Streptomycetaceae</taxon>
        <taxon>Streptomyces</taxon>
        <taxon>Streptomyces violaceusniger group</taxon>
    </lineage>
</organism>
<protein>
    <recommendedName>
        <fullName evidence="6">Validamycin A dioxygenase</fullName>
        <ecNumber evidence="4">1.14.11.52</ecNumber>
    </recommendedName>
    <alternativeName>
        <fullName evidence="6">Alpha-ketoglutarate/Fe(II)-dependent dioxygenase VldW</fullName>
    </alternativeName>
    <alternativeName>
        <fullName evidence="6">Validamycin B synthase</fullName>
    </alternativeName>
</protein>
<comment type="function">
    <text evidence="4">Involved in the biosynthesis of validamycin B, a component of the antifungal and antibiotic validamycin complex used as a crop protectant. Catalyzes the regioselective hydroxylation of validamycin A (4-O-beta-D-glucopyranosyl-validoxylamine A) at the C-6 position to yield validamycin B. To a lesser extent, also able to convert validoxylamine A to its hydroxylated derivative.</text>
</comment>
<comment type="catalytic activity">
    <reaction evidence="4">
        <text>validamycin A + 2-oxoglutarate + O2 = validamycin B + succinate + CO2 + H(+)</text>
        <dbReference type="Rhea" id="RHEA:48752"/>
        <dbReference type="ChEBI" id="CHEBI:15378"/>
        <dbReference type="ChEBI" id="CHEBI:15379"/>
        <dbReference type="ChEBI" id="CHEBI:16526"/>
        <dbReference type="ChEBI" id="CHEBI:16810"/>
        <dbReference type="ChEBI" id="CHEBI:30031"/>
        <dbReference type="ChEBI" id="CHEBI:90868"/>
        <dbReference type="ChEBI" id="CHEBI:90869"/>
        <dbReference type="EC" id="1.14.11.52"/>
    </reaction>
</comment>
<comment type="catalytic activity">
    <reaction evidence="4">
        <text>validoxylamine A + 2-oxoglutarate + O2 = validoxylamine B + succinate + CO2 + H(+)</text>
        <dbReference type="Rhea" id="RHEA:55648"/>
        <dbReference type="ChEBI" id="CHEBI:15378"/>
        <dbReference type="ChEBI" id="CHEBI:15379"/>
        <dbReference type="ChEBI" id="CHEBI:16526"/>
        <dbReference type="ChEBI" id="CHEBI:16810"/>
        <dbReference type="ChEBI" id="CHEBI:30031"/>
        <dbReference type="ChEBI" id="CHEBI:111505"/>
        <dbReference type="ChEBI" id="CHEBI:141057"/>
    </reaction>
</comment>
<comment type="cofactor">
    <cofactor evidence="8">
        <name>Fe(2+)</name>
        <dbReference type="ChEBI" id="CHEBI:29033"/>
    </cofactor>
    <text evidence="1">Binds 1 Fe(2+) ion per subunit.</text>
</comment>
<comment type="biophysicochemical properties">
    <kinetics>
        <KM evidence="4">19 uM for 2-oxoglutarate (at pH 7.2)</KM>
        <KM evidence="4">303 uM for validamycin A (at pH 7.2)</KM>
        <text evidence="4">kcat is 0.97 min(-1) for validamycin A as substrate (at pH 7.2).</text>
    </kinetics>
    <phDependence>
        <text evidence="4">Optimum pH is 7.2.</text>
    </phDependence>
</comment>
<comment type="pathway">
    <text evidence="8">Antibiotic biosynthesis.</text>
</comment>
<comment type="disruption phenotype">
    <text evidence="3">Cells lacking this gene are still able to produce the aminoglycoside antibiotic validamycin A, but not validamycin B.</text>
</comment>
<comment type="similarity">
    <text evidence="7">Belongs to the iron/ascorbate-dependent oxidoreductase family.</text>
</comment>
<reference key="1">
    <citation type="journal article" date="2006" name="Gene">
        <title>Genetic localization and heterologous expression of validamycin biosynthetic gene cluster isolated from Streptomyces hygroscopicus var. limoneus KCCM 11405 (IFO 12704).</title>
        <authorList>
            <person name="Singh D."/>
            <person name="Seo M.J."/>
            <person name="Kwon H.J."/>
            <person name="Rajkarnikar A."/>
            <person name="Kim K.R."/>
            <person name="Kim S.O."/>
            <person name="Suh J.W."/>
        </authorList>
    </citation>
    <scope>NUCLEOTIDE SEQUENCE [GENOMIC DNA]</scope>
    <scope>DISRUPTION PHENOTYPE</scope>
    <source>
        <strain evidence="9">ATCC 21432 / NBRC 12704 / KCTC 1717 / KCCM 11405</strain>
    </source>
</reference>
<reference key="2">
    <citation type="submission" date="2015-11" db="EMBL/GenBank/DDBJ databases">
        <authorList>
            <person name="Kim K.M."/>
        </authorList>
    </citation>
    <scope>NUCLEOTIDE SEQUENCE [LARGE SCALE GENOMIC DNA]</scope>
    <source>
        <strain>ATCC 21432 / NBRC 12704 / KCTC 1717 / KCCM 11405</strain>
    </source>
</reference>
<reference key="3">
    <citation type="journal article" date="2012" name="ChemBioChem">
        <title>The alpha-ketoglutarate/Fe(II)-dependent dioxygenase VldW is responsible for the formation of validamycin B.</title>
        <authorList>
            <person name="Almabruk K.H."/>
            <person name="Asamizu S."/>
            <person name="Chang A."/>
            <person name="Varghese S.G."/>
            <person name="Mahmud T."/>
        </authorList>
    </citation>
    <scope>FUNCTION</scope>
    <scope>CATALYTIC ACTIVITY</scope>
    <scope>BIOPHYSICOCHEMICAL PROPERTIES</scope>
    <scope>PATHWAY</scope>
    <scope>COFACTOR</scope>
    <scope>SUBSTRATE SPECIFICITY</scope>
</reference>
<accession>Q15JG7</accession>
<feature type="chain" id="PRO_0000444994" description="Validamycin A dioxygenase">
    <location>
        <begin position="1"/>
        <end position="365"/>
    </location>
</feature>
<feature type="domain" description="Fe2OG dioxygenase" evidence="1">
    <location>
        <begin position="174"/>
        <end position="284"/>
    </location>
</feature>
<feature type="region of interest" description="Disordered" evidence="2">
    <location>
        <begin position="331"/>
        <end position="365"/>
    </location>
</feature>
<feature type="compositionally biased region" description="Low complexity" evidence="2">
    <location>
        <begin position="336"/>
        <end position="348"/>
    </location>
</feature>
<feature type="binding site" evidence="1">
    <location>
        <position position="203"/>
    </location>
    <ligand>
        <name>Fe cation</name>
        <dbReference type="ChEBI" id="CHEBI:24875"/>
    </ligand>
</feature>
<feature type="binding site" evidence="1">
    <location>
        <position position="205"/>
    </location>
    <ligand>
        <name>Fe cation</name>
        <dbReference type="ChEBI" id="CHEBI:24875"/>
    </ligand>
</feature>
<feature type="binding site" evidence="1">
    <location>
        <position position="261"/>
    </location>
    <ligand>
        <name>Fe cation</name>
        <dbReference type="ChEBI" id="CHEBI:24875"/>
    </ligand>
</feature>
<evidence type="ECO:0000255" key="1">
    <source>
        <dbReference type="PROSITE-ProRule" id="PRU00805"/>
    </source>
</evidence>
<evidence type="ECO:0000256" key="2">
    <source>
        <dbReference type="SAM" id="MobiDB-lite"/>
    </source>
</evidence>
<evidence type="ECO:0000269" key="3">
    <source>
    </source>
</evidence>
<evidence type="ECO:0000269" key="4">
    <source>
    </source>
</evidence>
<evidence type="ECO:0000303" key="5">
    <source>
    </source>
</evidence>
<evidence type="ECO:0000303" key="6">
    <source>
    </source>
</evidence>
<evidence type="ECO:0000305" key="7"/>
<evidence type="ECO:0000305" key="8">
    <source>
    </source>
</evidence>
<evidence type="ECO:0000312" key="9">
    <source>
        <dbReference type="EMBL" id="ABC67263.1"/>
    </source>
</evidence>
<evidence type="ECO:0000312" key="10">
    <source>
        <dbReference type="EMBL" id="ALO98989.1"/>
    </source>
</evidence>
<keyword id="KW-0045">Antibiotic biosynthesis</keyword>
<keyword id="KW-0223">Dioxygenase</keyword>
<keyword id="KW-0408">Iron</keyword>
<keyword id="KW-0479">Metal-binding</keyword>
<keyword id="KW-0560">Oxidoreductase</keyword>
<name>VLDW_STRHL</name>
<dbReference type="EC" id="1.14.11.52" evidence="4"/>
<dbReference type="EMBL" id="DQ223652">
    <property type="protein sequence ID" value="ABC67263.1"/>
    <property type="molecule type" value="Genomic_DNA"/>
</dbReference>
<dbReference type="EMBL" id="CP013220">
    <property type="protein sequence ID" value="ALO98989.1"/>
    <property type="molecule type" value="Genomic_DNA"/>
</dbReference>
<dbReference type="SMR" id="Q15JG7"/>
<dbReference type="KEGG" id="ag:ABC67263"/>
<dbReference type="PATRIC" id="fig|264445.3.peg.8527"/>
<dbReference type="BioCyc" id="MetaCyc:MONOMER-19692"/>
<dbReference type="BRENDA" id="1.14.11.52">
    <property type="organism ID" value="14504"/>
</dbReference>
<dbReference type="GO" id="GO:0051213">
    <property type="term" value="F:dioxygenase activity"/>
    <property type="evidence" value="ECO:0000314"/>
    <property type="project" value="UniProtKB"/>
</dbReference>
<dbReference type="GO" id="GO:0005506">
    <property type="term" value="F:iron ion binding"/>
    <property type="evidence" value="ECO:0000304"/>
    <property type="project" value="UniProtKB"/>
</dbReference>
<dbReference type="GO" id="GO:0017000">
    <property type="term" value="P:antibiotic biosynthetic process"/>
    <property type="evidence" value="ECO:0007669"/>
    <property type="project" value="UniProtKB-KW"/>
</dbReference>
<dbReference type="FunFam" id="2.60.120.330:FF:000104">
    <property type="entry name" value="Validamycin A dioxygenase"/>
    <property type="match status" value="1"/>
</dbReference>
<dbReference type="Gene3D" id="2.60.120.330">
    <property type="entry name" value="B-lactam Antibiotic, Isopenicillin N Synthase, Chain"/>
    <property type="match status" value="1"/>
</dbReference>
<dbReference type="InterPro" id="IPR026992">
    <property type="entry name" value="DIOX_N"/>
</dbReference>
<dbReference type="InterPro" id="IPR044861">
    <property type="entry name" value="IPNS-like_FE2OG_OXY"/>
</dbReference>
<dbReference type="InterPro" id="IPR027443">
    <property type="entry name" value="IPNS-like_sf"/>
</dbReference>
<dbReference type="InterPro" id="IPR050231">
    <property type="entry name" value="Iron_ascorbate_oxido_reductase"/>
</dbReference>
<dbReference type="InterPro" id="IPR005123">
    <property type="entry name" value="Oxoglu/Fe-dep_dioxygenase_dom"/>
</dbReference>
<dbReference type="PANTHER" id="PTHR47990">
    <property type="entry name" value="2-OXOGLUTARATE (2OG) AND FE(II)-DEPENDENT OXYGENASE SUPERFAMILY PROTEIN-RELATED"/>
    <property type="match status" value="1"/>
</dbReference>
<dbReference type="Pfam" id="PF03171">
    <property type="entry name" value="2OG-FeII_Oxy"/>
    <property type="match status" value="1"/>
</dbReference>
<dbReference type="Pfam" id="PF14226">
    <property type="entry name" value="DIOX_N"/>
    <property type="match status" value="1"/>
</dbReference>
<dbReference type="SUPFAM" id="SSF51197">
    <property type="entry name" value="Clavaminate synthase-like"/>
    <property type="match status" value="1"/>
</dbReference>
<dbReference type="PROSITE" id="PS51471">
    <property type="entry name" value="FE2OG_OXY"/>
    <property type="match status" value="1"/>
</dbReference>
<sequence length="365" mass="39638">MTGSVPIVDLEAWRAADEENRASLAEIIDGALHTVGTFLLAGHGVPAELTARMRTAGRSFFDLPWEKKEPHAVQRPHDNGWRGLVKHRTDTIEGTGGAPDLHEAFHMGPTHRTGDDAFDALYYPANKWPAELPELRETALAYTAHMTRVAGAVMEMLAGVLGLEPAFFTSRCEHATWTQSVNWYPSLDTVGQTAEGQMRVGPHTDFGTITLLDRQQGVSGLEVWSEEDGWFAPPFVEGTLLVNLGDLMHQWTDGRWRSLRHRVLAPSASAPQEELVSLVYFFDADPEAELVPLAAPVGGGAGMPTVNVGETILKKNIQMLTDLKGHGLFQGELSLSRPGSADSPGSSPADDHPSRPGRHPAQGPQ</sequence>